<name>RPOC_ENDTX</name>
<sequence length="1593" mass="179214">MVKINFQIKKKKSNGPNFIGFDAVRVSVASPDQIKTWSYGEVKKPETINYRTFKPERDGLFCNRIFGPTKDWECHCGKYKYIKYKGTICDRCGVEVTESKVRRERFGHINLAVPVAHLWFLKKPPSRVGILLNMKISDLEKVIYYAKYIVMGDLKDRSGISFFARKGMLMGGEDFNLFKYGINNPIVKEEFKNIFDGIVCEEIKLDSNLTKALKQLKVLVKGQADSAGISTEEAAKKILENVKKGDIYYKVYFKPHSVYYYIDLDPSSHGEIKKILSEKFEKSSTVSITETDKKIRIEFFDIEKDKIYNDLRKDSFALKKYEGCLRIEILKNKIPFIENFSRSDSFVLLEESDINNIQNGFGDSLKVNIGAEAVRSLLEEINLDDEMKNIYAEIKKTKSDAERARLLRKLRVVEGFLNSQTRPEWMILTVLPVIPPDLRPLVALDGGRFATSDLNDLYRRIINRNNRLRHIEQLKAPIVMINNEKRLLQEAVDALIDNDSRMRPVTGAGNRILKSLSDTLKGKRGRFRQNLLGKRVDYSGRSVIVVGPNLRLNQCGIPKEMALELFKPFIVKELIKQENITLRSAKRMLERGDLKVWNILEKVTQSHPVLLNRAPTLHRLGIQAFEPVLVEGKSIQLHPLTCSAFNADFDGDQMAVHLPISLEAQLEARVLMMATRNILSPASGRPIAVPSQDMVLGNCYLTKEKYGVVGEGKVFSSVSEAISAYQAEKVDLQARIKVAGITSIRDKNLNNDDEQPDVTKWKNCKSEDDTEIINYTTVGRIIFNEQLPKNDDGSYALEYQNKSMTKKELVALVDRCYKELGQFKTTVLLDEIKRIGYKYATLAGISISIDEMKVPTEKEKMVREAKTKISEIEKQAKLGLITESERYNRIIDIWTRVTDEISDIMFDEMRKEETKAYKPGQNRFNSIFMMADSGSRGSRQQVRQLAGMRGLMAKPQKKLTGGIGEIIETPIISNFREGLTVLEYFISTHGGRKGLADTALKTAEAGYLTRRLVDVAHDVVVREEDCGTVNGVFIGTLRCGDEIIEKIDERVVGRTALDNVVDIVHDDLIIKRGELITPKKAEKLVEAGIDKIGIRSVLTCESGHGVCAKCYGVNPATGEQVEMGEAVGILAAQSIGEPGTQLTLRTFHIGGAASRVVQRSEVYAENNGTVNYYNLKTIQNKDGETIVLSRNAELVYTEYPVYRKQIYQIPYGAVIKIYDGQTVEIRVNPITGMKKDILIAKWDPHSKPIISEFDGTVNFVDVKDGVTLQREKSKITGQIERVIIEHSSDRRSPRIVVKKDDGSVVEYPLPVDTTLVVRDKDRVKSGDILAKIPQEISRTKDITGGLPRVAELFEGRRPRNVAVVSEIDGIVHLVGPTVKGNVKVEVENPETKMKKSYLVRAGRHLVVYEGDRVKEGEALSDGAINPHDILKVKGPKEVQEYLVNEIQQVYRLQGVSINDKHIEIIVRQMLSNVRITDSGDSHYLNGEIVSRYKYEIDRKAIKGKKGKAPIAHSILLGITKASLSSDSFISAASFQETTRILTEAAVSGQVDYLKGLKENVSIGRLIPAGTGLAAVDIDDNNKFYSREQNDAND</sequence>
<organism>
    <name type="scientific">Endomicrobium trichonymphae</name>
    <dbReference type="NCBI Taxonomy" id="1408204"/>
    <lineage>
        <taxon>Bacteria</taxon>
        <taxon>Pseudomonadati</taxon>
        <taxon>Elusimicrobiota</taxon>
        <taxon>Endomicrobiia</taxon>
        <taxon>Endomicrobiales</taxon>
        <taxon>Endomicrobiaceae</taxon>
        <taxon>Candidatus Endomicrobiellum</taxon>
    </lineage>
</organism>
<evidence type="ECO:0000255" key="1">
    <source>
        <dbReference type="HAMAP-Rule" id="MF_01322"/>
    </source>
</evidence>
<gene>
    <name evidence="1" type="primary">rpoC</name>
    <name type="ordered locus">TGRD_075</name>
</gene>
<proteinExistence type="inferred from homology"/>
<accession>B1GZ76</accession>
<comment type="function">
    <text evidence="1">DNA-dependent RNA polymerase catalyzes the transcription of DNA into RNA using the four ribonucleoside triphosphates as substrates.</text>
</comment>
<comment type="catalytic activity">
    <reaction evidence="1">
        <text>RNA(n) + a ribonucleoside 5'-triphosphate = RNA(n+1) + diphosphate</text>
        <dbReference type="Rhea" id="RHEA:21248"/>
        <dbReference type="Rhea" id="RHEA-COMP:14527"/>
        <dbReference type="Rhea" id="RHEA-COMP:17342"/>
        <dbReference type="ChEBI" id="CHEBI:33019"/>
        <dbReference type="ChEBI" id="CHEBI:61557"/>
        <dbReference type="ChEBI" id="CHEBI:140395"/>
        <dbReference type="EC" id="2.7.7.6"/>
    </reaction>
</comment>
<comment type="cofactor">
    <cofactor evidence="1">
        <name>Mg(2+)</name>
        <dbReference type="ChEBI" id="CHEBI:18420"/>
    </cofactor>
    <text evidence="1">Binds 1 Mg(2+) ion per subunit.</text>
</comment>
<comment type="cofactor">
    <cofactor evidence="1">
        <name>Zn(2+)</name>
        <dbReference type="ChEBI" id="CHEBI:29105"/>
    </cofactor>
    <text evidence="1">Binds 2 Zn(2+) ions per subunit.</text>
</comment>
<comment type="subunit">
    <text evidence="1">The RNAP catalytic core consists of 2 alpha, 1 beta, 1 beta' and 1 omega subunit. When a sigma factor is associated with the core the holoenzyme is formed, which can initiate transcription.</text>
</comment>
<comment type="similarity">
    <text evidence="1">Belongs to the RNA polymerase beta' chain family.</text>
</comment>
<protein>
    <recommendedName>
        <fullName evidence="1">DNA-directed RNA polymerase subunit beta'</fullName>
        <shortName evidence="1">RNAP subunit beta'</shortName>
        <ecNumber evidence="1">2.7.7.6</ecNumber>
    </recommendedName>
    <alternativeName>
        <fullName evidence="1">RNA polymerase subunit beta'</fullName>
    </alternativeName>
    <alternativeName>
        <fullName evidence="1">Transcriptase subunit beta'</fullName>
    </alternativeName>
</protein>
<reference key="1">
    <citation type="journal article" date="2008" name="Proc. Natl. Acad. Sci. U.S.A.">
        <title>Complete genome of the uncultured termite group 1 bacteria in a single host protist cell.</title>
        <authorList>
            <person name="Hongoh Y."/>
            <person name="Sharma V.K."/>
            <person name="Prakash T."/>
            <person name="Noda S."/>
            <person name="Taylor T.D."/>
            <person name="Kudo T."/>
            <person name="Sakaki Y."/>
            <person name="Toyoda A."/>
            <person name="Hattori M."/>
            <person name="Ohkuma M."/>
        </authorList>
    </citation>
    <scope>NUCLEOTIDE SEQUENCE [LARGE SCALE GENOMIC DNA]</scope>
</reference>
<keyword id="KW-0240">DNA-directed RNA polymerase</keyword>
<keyword id="KW-0460">Magnesium</keyword>
<keyword id="KW-0479">Metal-binding</keyword>
<keyword id="KW-0548">Nucleotidyltransferase</keyword>
<keyword id="KW-0804">Transcription</keyword>
<keyword id="KW-0808">Transferase</keyword>
<keyword id="KW-0862">Zinc</keyword>
<feature type="chain" id="PRO_0000353452" description="DNA-directed RNA polymerase subunit beta'">
    <location>
        <begin position="1"/>
        <end position="1593"/>
    </location>
</feature>
<feature type="binding site" evidence="1">
    <location>
        <position position="74"/>
    </location>
    <ligand>
        <name>Zn(2+)</name>
        <dbReference type="ChEBI" id="CHEBI:29105"/>
        <label>1</label>
    </ligand>
</feature>
<feature type="binding site" evidence="1">
    <location>
        <position position="76"/>
    </location>
    <ligand>
        <name>Zn(2+)</name>
        <dbReference type="ChEBI" id="CHEBI:29105"/>
        <label>1</label>
    </ligand>
</feature>
<feature type="binding site" evidence="1">
    <location>
        <position position="89"/>
    </location>
    <ligand>
        <name>Zn(2+)</name>
        <dbReference type="ChEBI" id="CHEBI:29105"/>
        <label>1</label>
    </ligand>
</feature>
<feature type="binding site" evidence="1">
    <location>
        <position position="92"/>
    </location>
    <ligand>
        <name>Zn(2+)</name>
        <dbReference type="ChEBI" id="CHEBI:29105"/>
        <label>1</label>
    </ligand>
</feature>
<feature type="binding site" evidence="1">
    <location>
        <position position="648"/>
    </location>
    <ligand>
        <name>Mg(2+)</name>
        <dbReference type="ChEBI" id="CHEBI:18420"/>
    </ligand>
</feature>
<feature type="binding site" evidence="1">
    <location>
        <position position="650"/>
    </location>
    <ligand>
        <name>Mg(2+)</name>
        <dbReference type="ChEBI" id="CHEBI:18420"/>
    </ligand>
</feature>
<feature type="binding site" evidence="1">
    <location>
        <position position="652"/>
    </location>
    <ligand>
        <name>Mg(2+)</name>
        <dbReference type="ChEBI" id="CHEBI:18420"/>
    </ligand>
</feature>
<feature type="binding site" evidence="1">
    <location>
        <position position="1026"/>
    </location>
    <ligand>
        <name>Zn(2+)</name>
        <dbReference type="ChEBI" id="CHEBI:29105"/>
        <label>2</label>
    </ligand>
</feature>
<feature type="binding site" evidence="1">
    <location>
        <position position="1100"/>
    </location>
    <ligand>
        <name>Zn(2+)</name>
        <dbReference type="ChEBI" id="CHEBI:29105"/>
        <label>2</label>
    </ligand>
</feature>
<feature type="binding site" evidence="1">
    <location>
        <position position="1107"/>
    </location>
    <ligand>
        <name>Zn(2+)</name>
        <dbReference type="ChEBI" id="CHEBI:29105"/>
        <label>2</label>
    </ligand>
</feature>
<feature type="binding site" evidence="1">
    <location>
        <position position="1110"/>
    </location>
    <ligand>
        <name>Zn(2+)</name>
        <dbReference type="ChEBI" id="CHEBI:29105"/>
        <label>2</label>
    </ligand>
</feature>
<dbReference type="EC" id="2.7.7.6" evidence="1"/>
<dbReference type="EMBL" id="AP009510">
    <property type="protein sequence ID" value="BAG13558.1"/>
    <property type="molecule type" value="Genomic_DNA"/>
</dbReference>
<dbReference type="RefSeq" id="WP_015423087.1">
    <property type="nucleotide sequence ID" value="NC_020419.1"/>
</dbReference>
<dbReference type="SMR" id="B1GZ76"/>
<dbReference type="STRING" id="471821.TGRD_075"/>
<dbReference type="KEGG" id="rsd:TGRD_075"/>
<dbReference type="PATRIC" id="fig|471821.5.peg.118"/>
<dbReference type="HOGENOM" id="CLU_000524_3_1_0"/>
<dbReference type="Proteomes" id="UP000001691">
    <property type="component" value="Chromosome"/>
</dbReference>
<dbReference type="GO" id="GO:0000428">
    <property type="term" value="C:DNA-directed RNA polymerase complex"/>
    <property type="evidence" value="ECO:0007669"/>
    <property type="project" value="UniProtKB-KW"/>
</dbReference>
<dbReference type="GO" id="GO:0003677">
    <property type="term" value="F:DNA binding"/>
    <property type="evidence" value="ECO:0007669"/>
    <property type="project" value="UniProtKB-UniRule"/>
</dbReference>
<dbReference type="GO" id="GO:0003899">
    <property type="term" value="F:DNA-directed RNA polymerase activity"/>
    <property type="evidence" value="ECO:0007669"/>
    <property type="project" value="UniProtKB-UniRule"/>
</dbReference>
<dbReference type="GO" id="GO:0000287">
    <property type="term" value="F:magnesium ion binding"/>
    <property type="evidence" value="ECO:0007669"/>
    <property type="project" value="UniProtKB-UniRule"/>
</dbReference>
<dbReference type="GO" id="GO:0008270">
    <property type="term" value="F:zinc ion binding"/>
    <property type="evidence" value="ECO:0007669"/>
    <property type="project" value="UniProtKB-UniRule"/>
</dbReference>
<dbReference type="GO" id="GO:0006351">
    <property type="term" value="P:DNA-templated transcription"/>
    <property type="evidence" value="ECO:0007669"/>
    <property type="project" value="UniProtKB-UniRule"/>
</dbReference>
<dbReference type="CDD" id="cd02655">
    <property type="entry name" value="RNAP_beta'_C"/>
    <property type="match status" value="1"/>
</dbReference>
<dbReference type="CDD" id="cd01609">
    <property type="entry name" value="RNAP_beta'_N"/>
    <property type="match status" value="1"/>
</dbReference>
<dbReference type="Gene3D" id="1.10.132.30">
    <property type="match status" value="1"/>
</dbReference>
<dbReference type="Gene3D" id="1.10.150.390">
    <property type="match status" value="1"/>
</dbReference>
<dbReference type="Gene3D" id="1.10.1790.20">
    <property type="match status" value="1"/>
</dbReference>
<dbReference type="Gene3D" id="1.10.40.90">
    <property type="match status" value="1"/>
</dbReference>
<dbReference type="Gene3D" id="2.40.40.20">
    <property type="match status" value="1"/>
</dbReference>
<dbReference type="Gene3D" id="2.40.50.100">
    <property type="match status" value="3"/>
</dbReference>
<dbReference type="Gene3D" id="4.10.860.120">
    <property type="entry name" value="RNA polymerase II, clamp domain"/>
    <property type="match status" value="1"/>
</dbReference>
<dbReference type="Gene3D" id="1.10.274.100">
    <property type="entry name" value="RNA polymerase Rpb1, domain 3"/>
    <property type="match status" value="1"/>
</dbReference>
<dbReference type="HAMAP" id="MF_01322">
    <property type="entry name" value="RNApol_bact_RpoC"/>
    <property type="match status" value="1"/>
</dbReference>
<dbReference type="InterPro" id="IPR045867">
    <property type="entry name" value="DNA-dir_RpoC_beta_prime"/>
</dbReference>
<dbReference type="InterPro" id="IPR012754">
    <property type="entry name" value="DNA-dir_RpoC_beta_prime_bact"/>
</dbReference>
<dbReference type="InterPro" id="IPR000722">
    <property type="entry name" value="RNA_pol_asu"/>
</dbReference>
<dbReference type="InterPro" id="IPR006592">
    <property type="entry name" value="RNA_pol_N"/>
</dbReference>
<dbReference type="InterPro" id="IPR007080">
    <property type="entry name" value="RNA_pol_Rpb1_1"/>
</dbReference>
<dbReference type="InterPro" id="IPR007066">
    <property type="entry name" value="RNA_pol_Rpb1_3"/>
</dbReference>
<dbReference type="InterPro" id="IPR042102">
    <property type="entry name" value="RNA_pol_Rpb1_3_sf"/>
</dbReference>
<dbReference type="InterPro" id="IPR007083">
    <property type="entry name" value="RNA_pol_Rpb1_4"/>
</dbReference>
<dbReference type="InterPro" id="IPR007081">
    <property type="entry name" value="RNA_pol_Rpb1_5"/>
</dbReference>
<dbReference type="InterPro" id="IPR044893">
    <property type="entry name" value="RNA_pol_Rpb1_clamp_domain"/>
</dbReference>
<dbReference type="InterPro" id="IPR038120">
    <property type="entry name" value="Rpb1_funnel_sf"/>
</dbReference>
<dbReference type="NCBIfam" id="TIGR02386">
    <property type="entry name" value="rpoC_TIGR"/>
    <property type="match status" value="1"/>
</dbReference>
<dbReference type="PANTHER" id="PTHR19376">
    <property type="entry name" value="DNA-DIRECTED RNA POLYMERASE"/>
    <property type="match status" value="1"/>
</dbReference>
<dbReference type="PANTHER" id="PTHR19376:SF54">
    <property type="entry name" value="DNA-DIRECTED RNA POLYMERASE SUBUNIT BETA"/>
    <property type="match status" value="1"/>
</dbReference>
<dbReference type="Pfam" id="PF04997">
    <property type="entry name" value="RNA_pol_Rpb1_1"/>
    <property type="match status" value="2"/>
</dbReference>
<dbReference type="Pfam" id="PF00623">
    <property type="entry name" value="RNA_pol_Rpb1_2"/>
    <property type="match status" value="2"/>
</dbReference>
<dbReference type="Pfam" id="PF04983">
    <property type="entry name" value="RNA_pol_Rpb1_3"/>
    <property type="match status" value="1"/>
</dbReference>
<dbReference type="Pfam" id="PF05000">
    <property type="entry name" value="RNA_pol_Rpb1_4"/>
    <property type="match status" value="1"/>
</dbReference>
<dbReference type="Pfam" id="PF04998">
    <property type="entry name" value="RNA_pol_Rpb1_5"/>
    <property type="match status" value="1"/>
</dbReference>
<dbReference type="SMART" id="SM00663">
    <property type="entry name" value="RPOLA_N"/>
    <property type="match status" value="1"/>
</dbReference>
<dbReference type="SUPFAM" id="SSF64484">
    <property type="entry name" value="beta and beta-prime subunits of DNA dependent RNA-polymerase"/>
    <property type="match status" value="1"/>
</dbReference>